<sequence>MAVSDLLNRRVRAVPDEDEEVYSEASASESESNDEEVEGSGSDISVDSSEGDYGSESQDESDAMSNENEVEDDEDDENSDDGQDDVQASLSNISFGALAKAQASLGPKAKRKSKATESTTDDGETPAASPLDDIRARIREAREQKRQGSSKSKDLEKPSRSSKHAPMVQSSKHPVTRKRTIIEPPAALKSRDPRFDPAVRSQSGRSEASQSAYAFLDDYRAAELKEMKEKLAKTKDPRQKEALKRDIRSATDRLRTIENRRREKEVLAEHKKREKELIRDGKKSNPYFLKKSDLKKQVLLKKYESMGSRQRVKALERRQKKLTAKERKEMPMERRGLGNDSTPYNDGGGGKRRRLA</sequence>
<comment type="function">
    <text evidence="1">Component of the 90S pre-ribosome involved in the maturation of rRNAs. Required for early cleavages of the pre-RNAs in the 40S ribosomal subunit maturation pathway (By similarity).</text>
</comment>
<comment type="subunit">
    <text evidence="1">Associates with 90S and pre-40S pre-ribosomal particles.</text>
</comment>
<comment type="subcellular location">
    <subcellularLocation>
        <location evidence="1">Nucleus</location>
        <location evidence="1">Nucleolus</location>
    </subcellularLocation>
</comment>
<comment type="similarity">
    <text evidence="4">Belongs to the RRP36 family.</text>
</comment>
<reference key="1">
    <citation type="journal article" date="2008" name="PLoS Genet.">
        <title>Genomic islands in the pathogenic filamentous fungus Aspergillus fumigatus.</title>
        <authorList>
            <person name="Fedorova N.D."/>
            <person name="Khaldi N."/>
            <person name="Joardar V.S."/>
            <person name="Maiti R."/>
            <person name="Amedeo P."/>
            <person name="Anderson M.J."/>
            <person name="Crabtree J."/>
            <person name="Silva J.C."/>
            <person name="Badger J.H."/>
            <person name="Albarraq A."/>
            <person name="Angiuoli S."/>
            <person name="Bussey H."/>
            <person name="Bowyer P."/>
            <person name="Cotty P.J."/>
            <person name="Dyer P.S."/>
            <person name="Egan A."/>
            <person name="Galens K."/>
            <person name="Fraser-Liggett C.M."/>
            <person name="Haas B.J."/>
            <person name="Inman J.M."/>
            <person name="Kent R."/>
            <person name="Lemieux S."/>
            <person name="Malavazi I."/>
            <person name="Orvis J."/>
            <person name="Roemer T."/>
            <person name="Ronning C.M."/>
            <person name="Sundaram J.P."/>
            <person name="Sutton G."/>
            <person name="Turner G."/>
            <person name="Venter J.C."/>
            <person name="White O.R."/>
            <person name="Whitty B.R."/>
            <person name="Youngman P."/>
            <person name="Wolfe K.H."/>
            <person name="Goldman G.H."/>
            <person name="Wortman J.R."/>
            <person name="Jiang B."/>
            <person name="Denning D.W."/>
            <person name="Nierman W.C."/>
        </authorList>
    </citation>
    <scope>NUCLEOTIDE SEQUENCE [LARGE SCALE GENOMIC DNA]</scope>
    <source>
        <strain>ATCC 1020 / DSM 3700 / CBS 544.65 / FGSC A1164 / JCM 1740 / NRRL 181 / WB 181</strain>
    </source>
</reference>
<evidence type="ECO:0000250" key="1"/>
<evidence type="ECO:0000255" key="2"/>
<evidence type="ECO:0000256" key="3">
    <source>
        <dbReference type="SAM" id="MobiDB-lite"/>
    </source>
</evidence>
<evidence type="ECO:0000305" key="4"/>
<proteinExistence type="inferred from homology"/>
<protein>
    <recommendedName>
        <fullName>rRNA biogenesis protein rrp36</fullName>
    </recommendedName>
    <alternativeName>
        <fullName>Ribosomal RNA-processing protein 36</fullName>
    </alternativeName>
</protein>
<organism>
    <name type="scientific">Neosartorya fischeri (strain ATCC 1020 / DSM 3700 / CBS 544.65 / FGSC A1164 / JCM 1740 / NRRL 181 / WB 181)</name>
    <name type="common">Aspergillus fischerianus</name>
    <dbReference type="NCBI Taxonomy" id="331117"/>
    <lineage>
        <taxon>Eukaryota</taxon>
        <taxon>Fungi</taxon>
        <taxon>Dikarya</taxon>
        <taxon>Ascomycota</taxon>
        <taxon>Pezizomycotina</taxon>
        <taxon>Eurotiomycetes</taxon>
        <taxon>Eurotiomycetidae</taxon>
        <taxon>Eurotiales</taxon>
        <taxon>Aspergillaceae</taxon>
        <taxon>Aspergillus</taxon>
        <taxon>Aspergillus subgen. Fumigati</taxon>
    </lineage>
</organism>
<feature type="chain" id="PRO_0000397642" description="rRNA biogenesis protein rrp36">
    <location>
        <begin position="1"/>
        <end position="356"/>
    </location>
</feature>
<feature type="region of interest" description="Disordered" evidence="3">
    <location>
        <begin position="1"/>
        <end position="209"/>
    </location>
</feature>
<feature type="region of interest" description="Disordered" evidence="3">
    <location>
        <begin position="307"/>
        <end position="356"/>
    </location>
</feature>
<feature type="coiled-coil region" evidence="2">
    <location>
        <begin position="238"/>
        <end position="279"/>
    </location>
</feature>
<feature type="compositionally biased region" description="Acidic residues" evidence="3">
    <location>
        <begin position="57"/>
        <end position="84"/>
    </location>
</feature>
<feature type="compositionally biased region" description="Basic and acidic residues" evidence="3">
    <location>
        <begin position="132"/>
        <end position="159"/>
    </location>
</feature>
<feature type="compositionally biased region" description="Polar residues" evidence="3">
    <location>
        <begin position="200"/>
        <end position="209"/>
    </location>
</feature>
<feature type="compositionally biased region" description="Basic and acidic residues" evidence="3">
    <location>
        <begin position="313"/>
        <end position="337"/>
    </location>
</feature>
<name>RRP36_NEOFI</name>
<dbReference type="EMBL" id="DS027698">
    <property type="protein sequence ID" value="EAW15767.1"/>
    <property type="molecule type" value="Genomic_DNA"/>
</dbReference>
<dbReference type="RefSeq" id="XP_001257664.1">
    <property type="nucleotide sequence ID" value="XM_001257663.1"/>
</dbReference>
<dbReference type="SMR" id="A1DLU6"/>
<dbReference type="STRING" id="331117.A1DLU6"/>
<dbReference type="EnsemblFungi" id="EAW15767">
    <property type="protein sequence ID" value="EAW15767"/>
    <property type="gene ID" value="NFIA_051120"/>
</dbReference>
<dbReference type="GeneID" id="4584179"/>
<dbReference type="KEGG" id="nfi:NFIA_051120"/>
<dbReference type="VEuPathDB" id="FungiDB:NFIA_051120"/>
<dbReference type="eggNOG" id="KOG3190">
    <property type="taxonomic scope" value="Eukaryota"/>
</dbReference>
<dbReference type="HOGENOM" id="CLU_048802_0_0_1"/>
<dbReference type="OMA" id="ERKEMPW"/>
<dbReference type="OrthoDB" id="448446at2759"/>
<dbReference type="Proteomes" id="UP000006702">
    <property type="component" value="Unassembled WGS sequence"/>
</dbReference>
<dbReference type="GO" id="GO:0030686">
    <property type="term" value="C:90S preribosome"/>
    <property type="evidence" value="ECO:0007669"/>
    <property type="project" value="TreeGrafter"/>
</dbReference>
<dbReference type="GO" id="GO:0005730">
    <property type="term" value="C:nucleolus"/>
    <property type="evidence" value="ECO:0007669"/>
    <property type="project" value="UniProtKB-SubCell"/>
</dbReference>
<dbReference type="GO" id="GO:0000462">
    <property type="term" value="P:maturation of SSU-rRNA from tricistronic rRNA transcript (SSU-rRNA, 5.8S rRNA, LSU-rRNA)"/>
    <property type="evidence" value="ECO:0007669"/>
    <property type="project" value="TreeGrafter"/>
</dbReference>
<dbReference type="InterPro" id="IPR009292">
    <property type="entry name" value="RRP36"/>
</dbReference>
<dbReference type="PANTHER" id="PTHR21738">
    <property type="entry name" value="RIBOSOMAL RNA PROCESSING PROTEIN 36 HOMOLOG"/>
    <property type="match status" value="1"/>
</dbReference>
<dbReference type="PANTHER" id="PTHR21738:SF0">
    <property type="entry name" value="RIBOSOMAL RNA PROCESSING PROTEIN 36 HOMOLOG"/>
    <property type="match status" value="1"/>
</dbReference>
<dbReference type="Pfam" id="PF06102">
    <property type="entry name" value="RRP36"/>
    <property type="match status" value="1"/>
</dbReference>
<keyword id="KW-0175">Coiled coil</keyword>
<keyword id="KW-0539">Nucleus</keyword>
<keyword id="KW-1185">Reference proteome</keyword>
<keyword id="KW-0687">Ribonucleoprotein</keyword>
<keyword id="KW-0690">Ribosome biogenesis</keyword>
<keyword id="KW-0698">rRNA processing</keyword>
<gene>
    <name type="primary">rrp36</name>
    <name type="ORF">NFIA_051120</name>
</gene>
<accession>A1DLU6</accession>